<name>RHAR_KLEP7</name>
<gene>
    <name evidence="1" type="primary">rhaR</name>
    <name type="ordered locus">KPN78578_41700</name>
    <name type="ORF">KPN_04215</name>
</gene>
<reference key="1">
    <citation type="submission" date="2006-09" db="EMBL/GenBank/DDBJ databases">
        <authorList>
            <consortium name="The Klebsiella pneumonia Genome Sequencing Project"/>
            <person name="McClelland M."/>
            <person name="Sanderson E.K."/>
            <person name="Spieth J."/>
            <person name="Clifton W.S."/>
            <person name="Latreille P."/>
            <person name="Sabo A."/>
            <person name="Pepin K."/>
            <person name="Bhonagiri V."/>
            <person name="Porwollik S."/>
            <person name="Ali J."/>
            <person name="Wilson R.K."/>
        </authorList>
    </citation>
    <scope>NUCLEOTIDE SEQUENCE [LARGE SCALE GENOMIC DNA]</scope>
    <source>
        <strain>ATCC 700721 / MGH 78578</strain>
    </source>
</reference>
<dbReference type="EMBL" id="CP000647">
    <property type="protein sequence ID" value="ABR79594.1"/>
    <property type="molecule type" value="Genomic_DNA"/>
</dbReference>
<dbReference type="RefSeq" id="WP_002882891.1">
    <property type="nucleotide sequence ID" value="NC_009648.1"/>
</dbReference>
<dbReference type="SMR" id="A6TGB0"/>
<dbReference type="STRING" id="272620.KPN_04215"/>
<dbReference type="PaxDb" id="272620-KPN_04215"/>
<dbReference type="EnsemblBacteria" id="ABR79594">
    <property type="protein sequence ID" value="ABR79594"/>
    <property type="gene ID" value="KPN_04215"/>
</dbReference>
<dbReference type="GeneID" id="69757903"/>
<dbReference type="KEGG" id="kpn:KPN_04215"/>
<dbReference type="HOGENOM" id="CLU_000445_88_5_6"/>
<dbReference type="Proteomes" id="UP000000265">
    <property type="component" value="Chromosome"/>
</dbReference>
<dbReference type="GO" id="GO:0005737">
    <property type="term" value="C:cytoplasm"/>
    <property type="evidence" value="ECO:0007669"/>
    <property type="project" value="UniProtKB-SubCell"/>
</dbReference>
<dbReference type="GO" id="GO:0003700">
    <property type="term" value="F:DNA-binding transcription factor activity"/>
    <property type="evidence" value="ECO:0007669"/>
    <property type="project" value="UniProtKB-UniRule"/>
</dbReference>
<dbReference type="GO" id="GO:0043565">
    <property type="term" value="F:sequence-specific DNA binding"/>
    <property type="evidence" value="ECO:0007669"/>
    <property type="project" value="InterPro"/>
</dbReference>
<dbReference type="GO" id="GO:0045893">
    <property type="term" value="P:positive regulation of DNA-templated transcription"/>
    <property type="evidence" value="ECO:0007669"/>
    <property type="project" value="UniProtKB-UniRule"/>
</dbReference>
<dbReference type="GO" id="GO:0019299">
    <property type="term" value="P:rhamnose metabolic process"/>
    <property type="evidence" value="ECO:0007669"/>
    <property type="project" value="UniProtKB-UniRule"/>
</dbReference>
<dbReference type="CDD" id="cd06977">
    <property type="entry name" value="cupin_RhaR_RhaS-like_N"/>
    <property type="match status" value="1"/>
</dbReference>
<dbReference type="Gene3D" id="1.10.10.60">
    <property type="entry name" value="Homeodomain-like"/>
    <property type="match status" value="1"/>
</dbReference>
<dbReference type="Gene3D" id="2.60.120.10">
    <property type="entry name" value="Jelly Rolls"/>
    <property type="match status" value="1"/>
</dbReference>
<dbReference type="HAMAP" id="MF_01533">
    <property type="entry name" value="HTH_type_RhaR"/>
    <property type="match status" value="1"/>
</dbReference>
<dbReference type="InterPro" id="IPR003313">
    <property type="entry name" value="AraC-bd"/>
</dbReference>
<dbReference type="InterPro" id="IPR009057">
    <property type="entry name" value="Homeodomain-like_sf"/>
</dbReference>
<dbReference type="InterPro" id="IPR037923">
    <property type="entry name" value="HTH-like"/>
</dbReference>
<dbReference type="InterPro" id="IPR018060">
    <property type="entry name" value="HTH_AraC"/>
</dbReference>
<dbReference type="InterPro" id="IPR018062">
    <property type="entry name" value="HTH_AraC-typ_CS"/>
</dbReference>
<dbReference type="InterPro" id="IPR047220">
    <property type="entry name" value="RhaR_RhaS-like_N"/>
</dbReference>
<dbReference type="InterPro" id="IPR014710">
    <property type="entry name" value="RmlC-like_jellyroll"/>
</dbReference>
<dbReference type="InterPro" id="IPR023699">
    <property type="entry name" value="Tscrpt_act_RhaR"/>
</dbReference>
<dbReference type="InterPro" id="IPR020449">
    <property type="entry name" value="Tscrpt_reg_AraC-type_HTH"/>
</dbReference>
<dbReference type="NCBIfam" id="NF010025">
    <property type="entry name" value="PRK13500.1"/>
    <property type="match status" value="1"/>
</dbReference>
<dbReference type="NCBIfam" id="NF010026">
    <property type="entry name" value="PRK13501.1"/>
    <property type="match status" value="1"/>
</dbReference>
<dbReference type="NCBIfam" id="NF010027">
    <property type="entry name" value="PRK13502.1"/>
    <property type="match status" value="1"/>
</dbReference>
<dbReference type="PANTHER" id="PTHR43280">
    <property type="entry name" value="ARAC-FAMILY TRANSCRIPTIONAL REGULATOR"/>
    <property type="match status" value="1"/>
</dbReference>
<dbReference type="PANTHER" id="PTHR43280:SF13">
    <property type="entry name" value="HTH-TYPE TRANSCRIPTIONAL ACTIVATOR RHAR"/>
    <property type="match status" value="1"/>
</dbReference>
<dbReference type="Pfam" id="PF02311">
    <property type="entry name" value="AraC_binding"/>
    <property type="match status" value="1"/>
</dbReference>
<dbReference type="Pfam" id="PF12833">
    <property type="entry name" value="HTH_18"/>
    <property type="match status" value="1"/>
</dbReference>
<dbReference type="PRINTS" id="PR00032">
    <property type="entry name" value="HTHARAC"/>
</dbReference>
<dbReference type="SMART" id="SM00342">
    <property type="entry name" value="HTH_ARAC"/>
    <property type="match status" value="1"/>
</dbReference>
<dbReference type="SUPFAM" id="SSF46689">
    <property type="entry name" value="Homeodomain-like"/>
    <property type="match status" value="1"/>
</dbReference>
<dbReference type="SUPFAM" id="SSF51215">
    <property type="entry name" value="Regulatory protein AraC"/>
    <property type="match status" value="1"/>
</dbReference>
<dbReference type="PROSITE" id="PS00041">
    <property type="entry name" value="HTH_ARAC_FAMILY_1"/>
    <property type="match status" value="1"/>
</dbReference>
<dbReference type="PROSITE" id="PS01124">
    <property type="entry name" value="HTH_ARAC_FAMILY_2"/>
    <property type="match status" value="1"/>
</dbReference>
<evidence type="ECO:0000255" key="1">
    <source>
        <dbReference type="HAMAP-Rule" id="MF_01533"/>
    </source>
</evidence>
<comment type="function">
    <text evidence="1">Activates expression of the rhaSR operon in response to L-rhamnose.</text>
</comment>
<comment type="subunit">
    <text evidence="1">Binds DNA as a dimer.</text>
</comment>
<comment type="subcellular location">
    <subcellularLocation>
        <location evidence="1">Cytoplasm</location>
    </subcellularLocation>
</comment>
<proteinExistence type="inferred from homology"/>
<organism>
    <name type="scientific">Klebsiella pneumoniae subsp. pneumoniae (strain ATCC 700721 / MGH 78578)</name>
    <dbReference type="NCBI Taxonomy" id="272620"/>
    <lineage>
        <taxon>Bacteria</taxon>
        <taxon>Pseudomonadati</taxon>
        <taxon>Pseudomonadota</taxon>
        <taxon>Gammaproteobacteria</taxon>
        <taxon>Enterobacterales</taxon>
        <taxon>Enterobacteriaceae</taxon>
        <taxon>Klebsiella/Raoultella group</taxon>
        <taxon>Klebsiella</taxon>
        <taxon>Klebsiella pneumoniae complex</taxon>
    </lineage>
</organism>
<keyword id="KW-0010">Activator</keyword>
<keyword id="KW-0963">Cytoplasm</keyword>
<keyword id="KW-0238">DNA-binding</keyword>
<keyword id="KW-0677">Repeat</keyword>
<keyword id="KW-0684">Rhamnose metabolism</keyword>
<keyword id="KW-0804">Transcription</keyword>
<keyword id="KW-0805">Transcription regulation</keyword>
<protein>
    <recommendedName>
        <fullName evidence="1">HTH-type transcriptional activator RhaR</fullName>
    </recommendedName>
    <alternativeName>
        <fullName evidence="1">L-rhamnose operon transcriptional activator RhaR</fullName>
    </alternativeName>
</protein>
<accession>A6TGB0</accession>
<sequence>MAGLILRKEEFFPSATQAVAVADRYPQNVFAEHTHEFCELVLVWRGNGLHVLNDRPWRITRGDLFYIRAEDKHSYASVNDLVLQNIIYCPERLQLNFDWAGAIPGLFGTPWKPHWRMGSTGMAQARQVISQLEHECARRDAQGNAMAELLFAQLALTLQRHRYATDDPAATQREALLDKLLAALAASLSRPFVLERFCEQEGGSERALRQQFRQQTGMTINHYLRQLRICHAQYLLQHTERLIGDIAMQCGFEDSNYFSVVFSREIGMSPGQWRQRSRAAA</sequence>
<feature type="chain" id="PRO_0000319847" description="HTH-type transcriptional activator RhaR">
    <location>
        <begin position="1"/>
        <end position="281"/>
    </location>
</feature>
<feature type="domain" description="HTH araC/xylS-type" evidence="1">
    <location>
        <begin position="178"/>
        <end position="276"/>
    </location>
</feature>
<feature type="DNA-binding region" description="H-T-H motif" evidence="1">
    <location>
        <begin position="195"/>
        <end position="216"/>
    </location>
</feature>
<feature type="DNA-binding region" description="H-T-H motif" evidence="1">
    <location>
        <begin position="243"/>
        <end position="266"/>
    </location>
</feature>
<feature type="site" description="Interaction with sigma-70" evidence="1">
    <location>
        <position position="245"/>
    </location>
</feature>